<organism>
    <name type="scientific">Paraburkholderia xenovorans (strain LB400)</name>
    <dbReference type="NCBI Taxonomy" id="266265"/>
    <lineage>
        <taxon>Bacteria</taxon>
        <taxon>Pseudomonadati</taxon>
        <taxon>Pseudomonadota</taxon>
        <taxon>Betaproteobacteria</taxon>
        <taxon>Burkholderiales</taxon>
        <taxon>Burkholderiaceae</taxon>
        <taxon>Paraburkholderia</taxon>
    </lineage>
</organism>
<feature type="chain" id="PRO_0000323094" description="Small ribosomal subunit protein uS5">
    <location>
        <begin position="1"/>
        <end position="172"/>
    </location>
</feature>
<feature type="domain" description="S5 DRBM" evidence="1">
    <location>
        <begin position="17"/>
        <end position="80"/>
    </location>
</feature>
<keyword id="KW-1185">Reference proteome</keyword>
<keyword id="KW-0687">Ribonucleoprotein</keyword>
<keyword id="KW-0689">Ribosomal protein</keyword>
<keyword id="KW-0694">RNA-binding</keyword>
<keyword id="KW-0699">rRNA-binding</keyword>
<evidence type="ECO:0000255" key="1">
    <source>
        <dbReference type="HAMAP-Rule" id="MF_01307"/>
    </source>
</evidence>
<evidence type="ECO:0000305" key="2"/>
<accession>Q13TI7</accession>
<dbReference type="EMBL" id="CP000270">
    <property type="protein sequence ID" value="ABE32602.1"/>
    <property type="molecule type" value="Genomic_DNA"/>
</dbReference>
<dbReference type="RefSeq" id="WP_007180127.1">
    <property type="nucleotide sequence ID" value="NZ_CP008760.1"/>
</dbReference>
<dbReference type="SMR" id="Q13TI7"/>
<dbReference type="STRING" id="266265.Bxe_A0331"/>
<dbReference type="KEGG" id="bxb:DR64_2501"/>
<dbReference type="KEGG" id="bxe:Bxe_A0331"/>
<dbReference type="eggNOG" id="COG0098">
    <property type="taxonomic scope" value="Bacteria"/>
</dbReference>
<dbReference type="OrthoDB" id="9809045at2"/>
<dbReference type="Proteomes" id="UP000001817">
    <property type="component" value="Chromosome 1"/>
</dbReference>
<dbReference type="GO" id="GO:0015935">
    <property type="term" value="C:small ribosomal subunit"/>
    <property type="evidence" value="ECO:0007669"/>
    <property type="project" value="InterPro"/>
</dbReference>
<dbReference type="GO" id="GO:0019843">
    <property type="term" value="F:rRNA binding"/>
    <property type="evidence" value="ECO:0007669"/>
    <property type="project" value="UniProtKB-UniRule"/>
</dbReference>
<dbReference type="GO" id="GO:0003735">
    <property type="term" value="F:structural constituent of ribosome"/>
    <property type="evidence" value="ECO:0007669"/>
    <property type="project" value="InterPro"/>
</dbReference>
<dbReference type="GO" id="GO:0006412">
    <property type="term" value="P:translation"/>
    <property type="evidence" value="ECO:0007669"/>
    <property type="project" value="UniProtKB-UniRule"/>
</dbReference>
<dbReference type="FunFam" id="3.30.160.20:FF:000001">
    <property type="entry name" value="30S ribosomal protein S5"/>
    <property type="match status" value="1"/>
</dbReference>
<dbReference type="FunFam" id="3.30.230.10:FF:000002">
    <property type="entry name" value="30S ribosomal protein S5"/>
    <property type="match status" value="1"/>
</dbReference>
<dbReference type="Gene3D" id="3.30.160.20">
    <property type="match status" value="1"/>
</dbReference>
<dbReference type="Gene3D" id="3.30.230.10">
    <property type="match status" value="1"/>
</dbReference>
<dbReference type="HAMAP" id="MF_01307_B">
    <property type="entry name" value="Ribosomal_uS5_B"/>
    <property type="match status" value="1"/>
</dbReference>
<dbReference type="InterPro" id="IPR020568">
    <property type="entry name" value="Ribosomal_Su5_D2-typ_SF"/>
</dbReference>
<dbReference type="InterPro" id="IPR000851">
    <property type="entry name" value="Ribosomal_uS5"/>
</dbReference>
<dbReference type="InterPro" id="IPR005712">
    <property type="entry name" value="Ribosomal_uS5_bac-type"/>
</dbReference>
<dbReference type="InterPro" id="IPR005324">
    <property type="entry name" value="Ribosomal_uS5_C"/>
</dbReference>
<dbReference type="InterPro" id="IPR013810">
    <property type="entry name" value="Ribosomal_uS5_N"/>
</dbReference>
<dbReference type="InterPro" id="IPR018192">
    <property type="entry name" value="Ribosomal_uS5_N_CS"/>
</dbReference>
<dbReference type="InterPro" id="IPR014721">
    <property type="entry name" value="Ribsml_uS5_D2-typ_fold_subgr"/>
</dbReference>
<dbReference type="NCBIfam" id="TIGR01021">
    <property type="entry name" value="rpsE_bact"/>
    <property type="match status" value="1"/>
</dbReference>
<dbReference type="PANTHER" id="PTHR48277">
    <property type="entry name" value="MITOCHONDRIAL RIBOSOMAL PROTEIN S5"/>
    <property type="match status" value="1"/>
</dbReference>
<dbReference type="PANTHER" id="PTHR48277:SF1">
    <property type="entry name" value="MITOCHONDRIAL RIBOSOMAL PROTEIN S5"/>
    <property type="match status" value="1"/>
</dbReference>
<dbReference type="Pfam" id="PF00333">
    <property type="entry name" value="Ribosomal_S5"/>
    <property type="match status" value="1"/>
</dbReference>
<dbReference type="Pfam" id="PF03719">
    <property type="entry name" value="Ribosomal_S5_C"/>
    <property type="match status" value="1"/>
</dbReference>
<dbReference type="SUPFAM" id="SSF54768">
    <property type="entry name" value="dsRNA-binding domain-like"/>
    <property type="match status" value="1"/>
</dbReference>
<dbReference type="SUPFAM" id="SSF54211">
    <property type="entry name" value="Ribosomal protein S5 domain 2-like"/>
    <property type="match status" value="1"/>
</dbReference>
<dbReference type="PROSITE" id="PS00585">
    <property type="entry name" value="RIBOSOMAL_S5"/>
    <property type="match status" value="1"/>
</dbReference>
<dbReference type="PROSITE" id="PS50881">
    <property type="entry name" value="S5_DSRBD"/>
    <property type="match status" value="1"/>
</dbReference>
<comment type="function">
    <text evidence="1">With S4 and S12 plays an important role in translational accuracy.</text>
</comment>
<comment type="function">
    <text evidence="1">Located at the back of the 30S subunit body where it stabilizes the conformation of the head with respect to the body.</text>
</comment>
<comment type="subunit">
    <text evidence="1">Part of the 30S ribosomal subunit. Contacts proteins S4 and S8.</text>
</comment>
<comment type="domain">
    <text>The N-terminal domain interacts with the head of the 30S subunit; the C-terminal domain interacts with the body and contacts protein S4. The interaction surface between S4 and S5 is involved in control of translational fidelity.</text>
</comment>
<comment type="similarity">
    <text evidence="1">Belongs to the universal ribosomal protein uS5 family.</text>
</comment>
<reference key="1">
    <citation type="journal article" date="2006" name="Proc. Natl. Acad. Sci. U.S.A.">
        <title>Burkholderia xenovorans LB400 harbors a multi-replicon, 9.73-Mbp genome shaped for versatility.</title>
        <authorList>
            <person name="Chain P.S.G."/>
            <person name="Denef V.J."/>
            <person name="Konstantinidis K.T."/>
            <person name="Vergez L.M."/>
            <person name="Agullo L."/>
            <person name="Reyes V.L."/>
            <person name="Hauser L."/>
            <person name="Cordova M."/>
            <person name="Gomez L."/>
            <person name="Gonzalez M."/>
            <person name="Land M."/>
            <person name="Lao V."/>
            <person name="Larimer F."/>
            <person name="LiPuma J.J."/>
            <person name="Mahenthiralingam E."/>
            <person name="Malfatti S.A."/>
            <person name="Marx C.J."/>
            <person name="Parnell J.J."/>
            <person name="Ramette A."/>
            <person name="Richardson P."/>
            <person name="Seeger M."/>
            <person name="Smith D."/>
            <person name="Spilker T."/>
            <person name="Sul W.J."/>
            <person name="Tsoi T.V."/>
            <person name="Ulrich L.E."/>
            <person name="Zhulin I.B."/>
            <person name="Tiedje J.M."/>
        </authorList>
    </citation>
    <scope>NUCLEOTIDE SEQUENCE [LARGE SCALE GENOMIC DNA]</scope>
    <source>
        <strain>LB400</strain>
    </source>
</reference>
<gene>
    <name evidence="1" type="primary">rpsE</name>
    <name type="ordered locus">Bxeno_A4064</name>
    <name type="ORF">Bxe_A0331</name>
</gene>
<protein>
    <recommendedName>
        <fullName evidence="1">Small ribosomal subunit protein uS5</fullName>
    </recommendedName>
    <alternativeName>
        <fullName evidence="2">30S ribosomal protein S5</fullName>
    </alternativeName>
</protein>
<sequence>MAKMQAKVQADERDDGLREKMISVNRVTKVVKGGRILGFAALTVVGDGDGRIGMGKGKAKEVPVAVQKAMEQARRNMFKVPLKNGTLQHEVHGKHGASAVLLAPAKDGTGVIAGGPMRAVFDVMGVQNVVAKSHGSTNPYNLVRATLDGLRKQSTPGDIAAKRGKSVEDILG</sequence>
<name>RS5_PARXL</name>
<proteinExistence type="inferred from homology"/>